<comment type="function">
    <text evidence="1">Involved in the gluconeogenesis. Catalyzes stereospecifically the conversion of dihydroxyacetone phosphate (DHAP) to D-glyceraldehyde-3-phosphate (G3P).</text>
</comment>
<comment type="catalytic activity">
    <reaction evidence="1">
        <text>D-glyceraldehyde 3-phosphate = dihydroxyacetone phosphate</text>
        <dbReference type="Rhea" id="RHEA:18585"/>
        <dbReference type="ChEBI" id="CHEBI:57642"/>
        <dbReference type="ChEBI" id="CHEBI:59776"/>
        <dbReference type="EC" id="5.3.1.1"/>
    </reaction>
</comment>
<comment type="pathway">
    <text evidence="1">Carbohydrate biosynthesis; gluconeogenesis.</text>
</comment>
<comment type="pathway">
    <text evidence="1">Carbohydrate degradation; glycolysis; D-glyceraldehyde 3-phosphate from glycerone phosphate: step 1/1.</text>
</comment>
<comment type="subunit">
    <text evidence="1">Homodimer.</text>
</comment>
<comment type="subcellular location">
    <subcellularLocation>
        <location evidence="1">Cytoplasm</location>
    </subcellularLocation>
</comment>
<comment type="similarity">
    <text evidence="1">Belongs to the triosephosphate isomerase family.</text>
</comment>
<name>TPIS_NOSS1</name>
<proteinExistence type="inferred from homology"/>
<accession>Q8YP17</accession>
<gene>
    <name evidence="1" type="primary">tpiA</name>
    <name type="ordered locus">alr4385</name>
</gene>
<feature type="chain" id="PRO_0000090172" description="Triosephosphate isomerase">
    <location>
        <begin position="1"/>
        <end position="241"/>
    </location>
</feature>
<feature type="active site" description="Electrophile" evidence="1">
    <location>
        <position position="96"/>
    </location>
</feature>
<feature type="active site" description="Proton acceptor" evidence="1">
    <location>
        <position position="165"/>
    </location>
</feature>
<feature type="binding site" evidence="1">
    <location>
        <begin position="9"/>
        <end position="11"/>
    </location>
    <ligand>
        <name>substrate</name>
    </ligand>
</feature>
<feature type="binding site" evidence="1">
    <location>
        <position position="171"/>
    </location>
    <ligand>
        <name>substrate</name>
    </ligand>
</feature>
<feature type="binding site" evidence="1">
    <location>
        <position position="204"/>
    </location>
    <ligand>
        <name>substrate</name>
    </ligand>
</feature>
<feature type="binding site" evidence="1">
    <location>
        <begin position="225"/>
        <end position="226"/>
    </location>
    <ligand>
        <name>substrate</name>
    </ligand>
</feature>
<reference key="1">
    <citation type="journal article" date="2001" name="DNA Res.">
        <title>Complete genomic sequence of the filamentous nitrogen-fixing cyanobacterium Anabaena sp. strain PCC 7120.</title>
        <authorList>
            <person name="Kaneko T."/>
            <person name="Nakamura Y."/>
            <person name="Wolk C.P."/>
            <person name="Kuritz T."/>
            <person name="Sasamoto S."/>
            <person name="Watanabe A."/>
            <person name="Iriguchi M."/>
            <person name="Ishikawa A."/>
            <person name="Kawashima K."/>
            <person name="Kimura T."/>
            <person name="Kishida Y."/>
            <person name="Kohara M."/>
            <person name="Matsumoto M."/>
            <person name="Matsuno A."/>
            <person name="Muraki A."/>
            <person name="Nakazaki N."/>
            <person name="Shimpo S."/>
            <person name="Sugimoto M."/>
            <person name="Takazawa M."/>
            <person name="Yamada M."/>
            <person name="Yasuda M."/>
            <person name="Tabata S."/>
        </authorList>
    </citation>
    <scope>NUCLEOTIDE SEQUENCE [LARGE SCALE GENOMIC DNA]</scope>
    <source>
        <strain>PCC 7120 / SAG 25.82 / UTEX 2576</strain>
    </source>
</reference>
<keyword id="KW-0963">Cytoplasm</keyword>
<keyword id="KW-0312">Gluconeogenesis</keyword>
<keyword id="KW-0324">Glycolysis</keyword>
<keyword id="KW-0413">Isomerase</keyword>
<keyword id="KW-1185">Reference proteome</keyword>
<protein>
    <recommendedName>
        <fullName evidence="1">Triosephosphate isomerase</fullName>
        <shortName evidence="1">TIM</shortName>
        <shortName evidence="1">TPI</shortName>
        <ecNumber evidence="1">5.3.1.1</ecNumber>
    </recommendedName>
    <alternativeName>
        <fullName evidence="1">Triose-phosphate isomerase</fullName>
    </alternativeName>
</protein>
<dbReference type="EC" id="5.3.1.1" evidence="1"/>
<dbReference type="EMBL" id="BA000019">
    <property type="protein sequence ID" value="BAB76084.1"/>
    <property type="molecule type" value="Genomic_DNA"/>
</dbReference>
<dbReference type="PIR" id="AI2353">
    <property type="entry name" value="AI2353"/>
</dbReference>
<dbReference type="RefSeq" id="WP_010998522.1">
    <property type="nucleotide sequence ID" value="NZ_RSCN01000051.1"/>
</dbReference>
<dbReference type="SMR" id="Q8YP17"/>
<dbReference type="STRING" id="103690.gene:10496434"/>
<dbReference type="KEGG" id="ana:alr4385"/>
<dbReference type="eggNOG" id="COG0149">
    <property type="taxonomic scope" value="Bacteria"/>
</dbReference>
<dbReference type="OrthoDB" id="9809429at2"/>
<dbReference type="UniPathway" id="UPA00109">
    <property type="reaction ID" value="UER00189"/>
</dbReference>
<dbReference type="UniPathway" id="UPA00138"/>
<dbReference type="Proteomes" id="UP000002483">
    <property type="component" value="Chromosome"/>
</dbReference>
<dbReference type="GO" id="GO:0005829">
    <property type="term" value="C:cytosol"/>
    <property type="evidence" value="ECO:0007669"/>
    <property type="project" value="TreeGrafter"/>
</dbReference>
<dbReference type="GO" id="GO:0004807">
    <property type="term" value="F:triose-phosphate isomerase activity"/>
    <property type="evidence" value="ECO:0007669"/>
    <property type="project" value="UniProtKB-UniRule"/>
</dbReference>
<dbReference type="GO" id="GO:0006094">
    <property type="term" value="P:gluconeogenesis"/>
    <property type="evidence" value="ECO:0007669"/>
    <property type="project" value="UniProtKB-UniRule"/>
</dbReference>
<dbReference type="GO" id="GO:0046166">
    <property type="term" value="P:glyceraldehyde-3-phosphate biosynthetic process"/>
    <property type="evidence" value="ECO:0007669"/>
    <property type="project" value="TreeGrafter"/>
</dbReference>
<dbReference type="GO" id="GO:0019563">
    <property type="term" value="P:glycerol catabolic process"/>
    <property type="evidence" value="ECO:0007669"/>
    <property type="project" value="TreeGrafter"/>
</dbReference>
<dbReference type="GO" id="GO:0006096">
    <property type="term" value="P:glycolytic process"/>
    <property type="evidence" value="ECO:0007669"/>
    <property type="project" value="UniProtKB-UniRule"/>
</dbReference>
<dbReference type="CDD" id="cd00311">
    <property type="entry name" value="TIM"/>
    <property type="match status" value="1"/>
</dbReference>
<dbReference type="FunFam" id="3.20.20.70:FF:000016">
    <property type="entry name" value="Triosephosphate isomerase"/>
    <property type="match status" value="1"/>
</dbReference>
<dbReference type="Gene3D" id="3.20.20.70">
    <property type="entry name" value="Aldolase class I"/>
    <property type="match status" value="1"/>
</dbReference>
<dbReference type="HAMAP" id="MF_00147_B">
    <property type="entry name" value="TIM_B"/>
    <property type="match status" value="1"/>
</dbReference>
<dbReference type="InterPro" id="IPR013785">
    <property type="entry name" value="Aldolase_TIM"/>
</dbReference>
<dbReference type="InterPro" id="IPR035990">
    <property type="entry name" value="TIM_sf"/>
</dbReference>
<dbReference type="InterPro" id="IPR022896">
    <property type="entry name" value="TrioseP_Isoase_bac/euk"/>
</dbReference>
<dbReference type="InterPro" id="IPR000652">
    <property type="entry name" value="Triosephosphate_isomerase"/>
</dbReference>
<dbReference type="InterPro" id="IPR020861">
    <property type="entry name" value="Triosephosphate_isomerase_AS"/>
</dbReference>
<dbReference type="NCBIfam" id="TIGR00419">
    <property type="entry name" value="tim"/>
    <property type="match status" value="1"/>
</dbReference>
<dbReference type="PANTHER" id="PTHR21139">
    <property type="entry name" value="TRIOSEPHOSPHATE ISOMERASE"/>
    <property type="match status" value="1"/>
</dbReference>
<dbReference type="PANTHER" id="PTHR21139:SF42">
    <property type="entry name" value="TRIOSEPHOSPHATE ISOMERASE"/>
    <property type="match status" value="1"/>
</dbReference>
<dbReference type="Pfam" id="PF00121">
    <property type="entry name" value="TIM"/>
    <property type="match status" value="1"/>
</dbReference>
<dbReference type="SUPFAM" id="SSF51351">
    <property type="entry name" value="Triosephosphate isomerase (TIM)"/>
    <property type="match status" value="1"/>
</dbReference>
<dbReference type="PROSITE" id="PS00171">
    <property type="entry name" value="TIM_1"/>
    <property type="match status" value="1"/>
</dbReference>
<dbReference type="PROSITE" id="PS51440">
    <property type="entry name" value="TIM_2"/>
    <property type="match status" value="1"/>
</dbReference>
<evidence type="ECO:0000255" key="1">
    <source>
        <dbReference type="HAMAP-Rule" id="MF_00147"/>
    </source>
</evidence>
<organism>
    <name type="scientific">Nostoc sp. (strain PCC 7120 / SAG 25.82 / UTEX 2576)</name>
    <dbReference type="NCBI Taxonomy" id="103690"/>
    <lineage>
        <taxon>Bacteria</taxon>
        <taxon>Bacillati</taxon>
        <taxon>Cyanobacteriota</taxon>
        <taxon>Cyanophyceae</taxon>
        <taxon>Nostocales</taxon>
        <taxon>Nostocaceae</taxon>
        <taxon>Nostoc</taxon>
    </lineage>
</organism>
<sequence length="241" mass="26552">MRKIVIAGNWKMFKTQAESQEFLKEFLPALEETPQEREVLLCVPFTDLAILSQSLHGSLVQLGAQNVHWAENGAYTGEISGPMLTEIGVRYVIVGHSERRQFFGETDETVNLRLQAAQKYGLTPILCVGETKQQRDSGETESLIVSQLDKDLINVDQTNLVIAYEPIWAIGTGDTCETTEANRVIGLIRSQLKNSDVPIQYGGSVKPNNIDEIMAQPEIDGVLVGGASLEAASFARIVNYL</sequence>